<accession>Q24040</accession>
<accession>Q95TG4</accession>
<accession>Q9W0B9</accession>
<feature type="chain" id="PRO_0000064920" description="Protein big brother">
    <location>
        <begin position="1"/>
        <end position="213"/>
    </location>
</feature>
<feature type="sequence conflict" description="In Ref. 1." evidence="1" ref="1">
    <original>A</original>
    <variation>S</variation>
    <location>
        <position position="8"/>
    </location>
</feature>
<feature type="sequence conflict" description="In Ref. 1." evidence="1" ref="1">
    <original>P</original>
    <variation>K</variation>
    <location>
        <position position="24"/>
    </location>
</feature>
<feature type="sequence conflict" description="In Ref. 1; AAB03676." evidence="1" ref="1">
    <original>E</original>
    <variation>D</variation>
    <location>
        <position position="141"/>
    </location>
</feature>
<organism>
    <name type="scientific">Drosophila melanogaster</name>
    <name type="common">Fruit fly</name>
    <dbReference type="NCBI Taxonomy" id="7227"/>
    <lineage>
        <taxon>Eukaryota</taxon>
        <taxon>Metazoa</taxon>
        <taxon>Ecdysozoa</taxon>
        <taxon>Arthropoda</taxon>
        <taxon>Hexapoda</taxon>
        <taxon>Insecta</taxon>
        <taxon>Pterygota</taxon>
        <taxon>Neoptera</taxon>
        <taxon>Endopterygota</taxon>
        <taxon>Diptera</taxon>
        <taxon>Brachycera</taxon>
        <taxon>Muscomorpha</taxon>
        <taxon>Ephydroidea</taxon>
        <taxon>Drosophilidae</taxon>
        <taxon>Drosophila</taxon>
        <taxon>Sophophora</taxon>
    </lineage>
</organism>
<reference key="1">
    <citation type="journal article" date="1996" name="Mol. Cell. Biol.">
        <title>Drosophila homologs of the proto-oncogene product PEBP2/CBF beta regulate the DNA-binding properties of Runt.</title>
        <authorList>
            <person name="Golling G."/>
            <person name="Li L."/>
            <person name="Pepling M."/>
            <person name="Stebbins M."/>
            <person name="Gergen J.P."/>
        </authorList>
    </citation>
    <scope>NUCLEOTIDE SEQUENCE [MRNA]</scope>
    <source>
        <tissue>Embryo</tissue>
    </source>
</reference>
<reference key="2">
    <citation type="journal article" date="2000" name="Science">
        <title>The genome sequence of Drosophila melanogaster.</title>
        <authorList>
            <person name="Adams M.D."/>
            <person name="Celniker S.E."/>
            <person name="Holt R.A."/>
            <person name="Evans C.A."/>
            <person name="Gocayne J.D."/>
            <person name="Amanatides P.G."/>
            <person name="Scherer S.E."/>
            <person name="Li P.W."/>
            <person name="Hoskins R.A."/>
            <person name="Galle R.F."/>
            <person name="George R.A."/>
            <person name="Lewis S.E."/>
            <person name="Richards S."/>
            <person name="Ashburner M."/>
            <person name="Henderson S.N."/>
            <person name="Sutton G.G."/>
            <person name="Wortman J.R."/>
            <person name="Yandell M.D."/>
            <person name="Zhang Q."/>
            <person name="Chen L.X."/>
            <person name="Brandon R.C."/>
            <person name="Rogers Y.-H.C."/>
            <person name="Blazej R.G."/>
            <person name="Champe M."/>
            <person name="Pfeiffer B.D."/>
            <person name="Wan K.H."/>
            <person name="Doyle C."/>
            <person name="Baxter E.G."/>
            <person name="Helt G."/>
            <person name="Nelson C.R."/>
            <person name="Miklos G.L.G."/>
            <person name="Abril J.F."/>
            <person name="Agbayani A."/>
            <person name="An H.-J."/>
            <person name="Andrews-Pfannkoch C."/>
            <person name="Baldwin D."/>
            <person name="Ballew R.M."/>
            <person name="Basu A."/>
            <person name="Baxendale J."/>
            <person name="Bayraktaroglu L."/>
            <person name="Beasley E.M."/>
            <person name="Beeson K.Y."/>
            <person name="Benos P.V."/>
            <person name="Berman B.P."/>
            <person name="Bhandari D."/>
            <person name="Bolshakov S."/>
            <person name="Borkova D."/>
            <person name="Botchan M.R."/>
            <person name="Bouck J."/>
            <person name="Brokstein P."/>
            <person name="Brottier P."/>
            <person name="Burtis K.C."/>
            <person name="Busam D.A."/>
            <person name="Butler H."/>
            <person name="Cadieu E."/>
            <person name="Center A."/>
            <person name="Chandra I."/>
            <person name="Cherry J.M."/>
            <person name="Cawley S."/>
            <person name="Dahlke C."/>
            <person name="Davenport L.B."/>
            <person name="Davies P."/>
            <person name="de Pablos B."/>
            <person name="Delcher A."/>
            <person name="Deng Z."/>
            <person name="Mays A.D."/>
            <person name="Dew I."/>
            <person name="Dietz S.M."/>
            <person name="Dodson K."/>
            <person name="Doup L.E."/>
            <person name="Downes M."/>
            <person name="Dugan-Rocha S."/>
            <person name="Dunkov B.C."/>
            <person name="Dunn P."/>
            <person name="Durbin K.J."/>
            <person name="Evangelista C.C."/>
            <person name="Ferraz C."/>
            <person name="Ferriera S."/>
            <person name="Fleischmann W."/>
            <person name="Fosler C."/>
            <person name="Gabrielian A.E."/>
            <person name="Garg N.S."/>
            <person name="Gelbart W.M."/>
            <person name="Glasser K."/>
            <person name="Glodek A."/>
            <person name="Gong F."/>
            <person name="Gorrell J.H."/>
            <person name="Gu Z."/>
            <person name="Guan P."/>
            <person name="Harris M."/>
            <person name="Harris N.L."/>
            <person name="Harvey D.A."/>
            <person name="Heiman T.J."/>
            <person name="Hernandez J.R."/>
            <person name="Houck J."/>
            <person name="Hostin D."/>
            <person name="Houston K.A."/>
            <person name="Howland T.J."/>
            <person name="Wei M.-H."/>
            <person name="Ibegwam C."/>
            <person name="Jalali M."/>
            <person name="Kalush F."/>
            <person name="Karpen G.H."/>
            <person name="Ke Z."/>
            <person name="Kennison J.A."/>
            <person name="Ketchum K.A."/>
            <person name="Kimmel B.E."/>
            <person name="Kodira C.D."/>
            <person name="Kraft C.L."/>
            <person name="Kravitz S."/>
            <person name="Kulp D."/>
            <person name="Lai Z."/>
            <person name="Lasko P."/>
            <person name="Lei Y."/>
            <person name="Levitsky A.A."/>
            <person name="Li J.H."/>
            <person name="Li Z."/>
            <person name="Liang Y."/>
            <person name="Lin X."/>
            <person name="Liu X."/>
            <person name="Mattei B."/>
            <person name="McIntosh T.C."/>
            <person name="McLeod M.P."/>
            <person name="McPherson D."/>
            <person name="Merkulov G."/>
            <person name="Milshina N.V."/>
            <person name="Mobarry C."/>
            <person name="Morris J."/>
            <person name="Moshrefi A."/>
            <person name="Mount S.M."/>
            <person name="Moy M."/>
            <person name="Murphy B."/>
            <person name="Murphy L."/>
            <person name="Muzny D.M."/>
            <person name="Nelson D.L."/>
            <person name="Nelson D.R."/>
            <person name="Nelson K.A."/>
            <person name="Nixon K."/>
            <person name="Nusskern D.R."/>
            <person name="Pacleb J.M."/>
            <person name="Palazzolo M."/>
            <person name="Pittman G.S."/>
            <person name="Pan S."/>
            <person name="Pollard J."/>
            <person name="Puri V."/>
            <person name="Reese M.G."/>
            <person name="Reinert K."/>
            <person name="Remington K."/>
            <person name="Saunders R.D.C."/>
            <person name="Scheeler F."/>
            <person name="Shen H."/>
            <person name="Shue B.C."/>
            <person name="Siden-Kiamos I."/>
            <person name="Simpson M."/>
            <person name="Skupski M.P."/>
            <person name="Smith T.J."/>
            <person name="Spier E."/>
            <person name="Spradling A.C."/>
            <person name="Stapleton M."/>
            <person name="Strong R."/>
            <person name="Sun E."/>
            <person name="Svirskas R."/>
            <person name="Tector C."/>
            <person name="Turner R."/>
            <person name="Venter E."/>
            <person name="Wang A.H."/>
            <person name="Wang X."/>
            <person name="Wang Z.-Y."/>
            <person name="Wassarman D.A."/>
            <person name="Weinstock G.M."/>
            <person name="Weissenbach J."/>
            <person name="Williams S.M."/>
            <person name="Woodage T."/>
            <person name="Worley K.C."/>
            <person name="Wu D."/>
            <person name="Yang S."/>
            <person name="Yao Q.A."/>
            <person name="Ye J."/>
            <person name="Yeh R.-F."/>
            <person name="Zaveri J.S."/>
            <person name="Zhan M."/>
            <person name="Zhang G."/>
            <person name="Zhao Q."/>
            <person name="Zheng L."/>
            <person name="Zheng X.H."/>
            <person name="Zhong F.N."/>
            <person name="Zhong W."/>
            <person name="Zhou X."/>
            <person name="Zhu S.C."/>
            <person name="Zhu X."/>
            <person name="Smith H.O."/>
            <person name="Gibbs R.A."/>
            <person name="Myers E.W."/>
            <person name="Rubin G.M."/>
            <person name="Venter J.C."/>
        </authorList>
    </citation>
    <scope>NUCLEOTIDE SEQUENCE [LARGE SCALE GENOMIC DNA]</scope>
    <source>
        <strain>Berkeley</strain>
    </source>
</reference>
<reference key="3">
    <citation type="journal article" date="2002" name="Genome Biol.">
        <title>Annotation of the Drosophila melanogaster euchromatic genome: a systematic review.</title>
        <authorList>
            <person name="Misra S."/>
            <person name="Crosby M.A."/>
            <person name="Mungall C.J."/>
            <person name="Matthews B.B."/>
            <person name="Campbell K.S."/>
            <person name="Hradecky P."/>
            <person name="Huang Y."/>
            <person name="Kaminker J.S."/>
            <person name="Millburn G.H."/>
            <person name="Prochnik S.E."/>
            <person name="Smith C.D."/>
            <person name="Tupy J.L."/>
            <person name="Whitfield E.J."/>
            <person name="Bayraktaroglu L."/>
            <person name="Berman B.P."/>
            <person name="Bettencourt B.R."/>
            <person name="Celniker S.E."/>
            <person name="de Grey A.D.N.J."/>
            <person name="Drysdale R.A."/>
            <person name="Harris N.L."/>
            <person name="Richter J."/>
            <person name="Russo S."/>
            <person name="Schroeder A.J."/>
            <person name="Shu S.Q."/>
            <person name="Stapleton M."/>
            <person name="Yamada C."/>
            <person name="Ashburner M."/>
            <person name="Gelbart W.M."/>
            <person name="Rubin G.M."/>
            <person name="Lewis S.E."/>
        </authorList>
    </citation>
    <scope>GENOME REANNOTATION</scope>
    <source>
        <strain>Berkeley</strain>
    </source>
</reference>
<reference key="4">
    <citation type="journal article" date="2002" name="Genome Biol.">
        <title>A Drosophila full-length cDNA resource.</title>
        <authorList>
            <person name="Stapleton M."/>
            <person name="Carlson J.W."/>
            <person name="Brokstein P."/>
            <person name="Yu C."/>
            <person name="Champe M."/>
            <person name="George R.A."/>
            <person name="Guarin H."/>
            <person name="Kronmiller B."/>
            <person name="Pacleb J.M."/>
            <person name="Park S."/>
            <person name="Wan K.H."/>
            <person name="Rubin G.M."/>
            <person name="Celniker S.E."/>
        </authorList>
    </citation>
    <scope>NUCLEOTIDE SEQUENCE [LARGE SCALE MRNA]</scope>
    <source>
        <strain>Berkeley</strain>
        <tissue>Embryo</tissue>
    </source>
</reference>
<protein>
    <recommendedName>
        <fullName>Protein big brother</fullName>
    </recommendedName>
</protein>
<dbReference type="EMBL" id="U22177">
    <property type="protein sequence ID" value="AAB03676.1"/>
    <property type="status" value="ALT_INIT"/>
    <property type="molecule type" value="mRNA"/>
</dbReference>
<dbReference type="EMBL" id="AE014296">
    <property type="protein sequence ID" value="AAF47533.3"/>
    <property type="molecule type" value="Genomic_DNA"/>
</dbReference>
<dbReference type="EMBL" id="AY058784">
    <property type="protein sequence ID" value="AAL14013.1"/>
    <property type="molecule type" value="mRNA"/>
</dbReference>
<dbReference type="RefSeq" id="NP_477065.3">
    <property type="nucleotide sequence ID" value="NM_057717.5"/>
</dbReference>
<dbReference type="SMR" id="Q24040"/>
<dbReference type="BioGRID" id="63732">
    <property type="interactions" value="11"/>
</dbReference>
<dbReference type="DIP" id="DIP-22891N"/>
<dbReference type="FunCoup" id="Q24040">
    <property type="interactions" value="1418"/>
</dbReference>
<dbReference type="IntAct" id="Q24040">
    <property type="interactions" value="11"/>
</dbReference>
<dbReference type="STRING" id="7227.FBpp0303213"/>
<dbReference type="PaxDb" id="7227-FBpp0072641"/>
<dbReference type="DNASU" id="38198"/>
<dbReference type="EnsemblMetazoa" id="FBtr0072758">
    <property type="protein sequence ID" value="FBpp0072641"/>
    <property type="gene ID" value="FBgn0013753"/>
</dbReference>
<dbReference type="GeneID" id="38198"/>
<dbReference type="KEGG" id="dme:Dmel_CG7959"/>
<dbReference type="AGR" id="FB:FBgn0013753"/>
<dbReference type="CTD" id="107447"/>
<dbReference type="FlyBase" id="FBgn0013753">
    <property type="gene designation" value="Bgb"/>
</dbReference>
<dbReference type="VEuPathDB" id="VectorBase:FBgn0013753"/>
<dbReference type="eggNOG" id="KOG4785">
    <property type="taxonomic scope" value="Eukaryota"/>
</dbReference>
<dbReference type="GeneTree" id="ENSGT00390000018132"/>
<dbReference type="HOGENOM" id="CLU_074992_0_1_1"/>
<dbReference type="InParanoid" id="Q24040"/>
<dbReference type="OMA" id="MHTMSEH"/>
<dbReference type="OrthoDB" id="10026505at2759"/>
<dbReference type="PhylomeDB" id="Q24040"/>
<dbReference type="Reactome" id="R-DME-8877330">
    <property type="pathway name" value="RUNX1 and FOXP3 control the development of regulatory T lymphocytes (Tregs)"/>
</dbReference>
<dbReference type="Reactome" id="R-DME-8878166">
    <property type="pathway name" value="Transcriptional regulation by RUNX2"/>
</dbReference>
<dbReference type="Reactome" id="R-DME-8931987">
    <property type="pathway name" value="RUNX1 regulates estrogen receptor mediated transcription"/>
</dbReference>
<dbReference type="Reactome" id="R-DME-8934593">
    <property type="pathway name" value="Regulation of RUNX1 Expression and Activity"/>
</dbReference>
<dbReference type="Reactome" id="R-DME-8936459">
    <property type="pathway name" value="RUNX1 regulates genes involved in megakaryocyte differentiation and platelet function"/>
</dbReference>
<dbReference type="Reactome" id="R-DME-8939236">
    <property type="pathway name" value="RUNX1 regulates transcription of genes involved in differentiation of HSCs"/>
</dbReference>
<dbReference type="Reactome" id="R-DME-8939243">
    <property type="pathway name" value="RUNX1 interacts with co-factors whose precise effect on RUNX1 targets is not known"/>
</dbReference>
<dbReference type="Reactome" id="R-DME-8939245">
    <property type="pathway name" value="RUNX1 regulates transcription of genes involved in BCR signaling"/>
</dbReference>
<dbReference type="Reactome" id="R-DME-8939246">
    <property type="pathway name" value="RUNX1 regulates transcription of genes involved in differentiation of myeloid cells"/>
</dbReference>
<dbReference type="Reactome" id="R-DME-8939247">
    <property type="pathway name" value="RUNX1 regulates transcription of genes involved in interleukin signaling"/>
</dbReference>
<dbReference type="Reactome" id="R-DME-8941326">
    <property type="pathway name" value="RUNX2 regulates bone development"/>
</dbReference>
<dbReference type="Reactome" id="R-DME-8941858">
    <property type="pathway name" value="Regulation of RUNX3 expression and activity"/>
</dbReference>
<dbReference type="Reactome" id="R-DME-8951936">
    <property type="pathway name" value="RUNX3 regulates p14-ARF"/>
</dbReference>
<dbReference type="Reactome" id="R-DME-9018519">
    <property type="pathway name" value="Estrogen-dependent gene expression"/>
</dbReference>
<dbReference type="SignaLink" id="Q24040"/>
<dbReference type="BioGRID-ORCS" id="38198">
    <property type="hits" value="0 hits in 1 CRISPR screen"/>
</dbReference>
<dbReference type="GenomeRNAi" id="38198"/>
<dbReference type="PRO" id="PR:Q24040"/>
<dbReference type="Proteomes" id="UP000000803">
    <property type="component" value="Chromosome 3L"/>
</dbReference>
<dbReference type="Bgee" id="FBgn0013753">
    <property type="expression patterns" value="Expressed in T neuron T5c (Drosophila) in embryonic/larval optic lobe (Drosophila) and 100 other cell types or tissues"/>
</dbReference>
<dbReference type="ExpressionAtlas" id="Q24040">
    <property type="expression patterns" value="baseline and differential"/>
</dbReference>
<dbReference type="GO" id="GO:0016513">
    <property type="term" value="C:core-binding factor complex"/>
    <property type="evidence" value="ECO:0000318"/>
    <property type="project" value="GO_Central"/>
</dbReference>
<dbReference type="GO" id="GO:0005634">
    <property type="term" value="C:nucleus"/>
    <property type="evidence" value="ECO:0000314"/>
    <property type="project" value="FlyBase"/>
</dbReference>
<dbReference type="GO" id="GO:0003713">
    <property type="term" value="F:transcription coactivator activity"/>
    <property type="evidence" value="ECO:0000314"/>
    <property type="project" value="FlyBase"/>
</dbReference>
<dbReference type="GO" id="GO:0035206">
    <property type="term" value="P:regulation of hemocyte proliferation"/>
    <property type="evidence" value="ECO:0000315"/>
    <property type="project" value="FlyBase"/>
</dbReference>
<dbReference type="GO" id="GO:0006357">
    <property type="term" value="P:regulation of transcription by RNA polymerase II"/>
    <property type="evidence" value="ECO:0000318"/>
    <property type="project" value="GO_Central"/>
</dbReference>
<dbReference type="FunFam" id="2.40.250.10:FF:000001">
    <property type="entry name" value="Core-binding factor subunit beta"/>
    <property type="match status" value="1"/>
</dbReference>
<dbReference type="Gene3D" id="2.40.250.10">
    <property type="entry name" value="Core binding factor, beta subunit"/>
    <property type="match status" value="1"/>
</dbReference>
<dbReference type="InterPro" id="IPR003417">
    <property type="entry name" value="CBF_beta"/>
</dbReference>
<dbReference type="InterPro" id="IPR036552">
    <property type="entry name" value="CBF_bsu_sf"/>
</dbReference>
<dbReference type="PANTHER" id="PTHR10276:SF3">
    <property type="entry name" value="CORE-BINDING FACTOR SUBUNIT BETA"/>
    <property type="match status" value="1"/>
</dbReference>
<dbReference type="PANTHER" id="PTHR10276">
    <property type="entry name" value="CORE-BINDING FACTOR, BETA SUBUNIT"/>
    <property type="match status" value="1"/>
</dbReference>
<dbReference type="Pfam" id="PF02312">
    <property type="entry name" value="CBF_beta"/>
    <property type="match status" value="1"/>
</dbReference>
<dbReference type="SUPFAM" id="SSF50723">
    <property type="entry name" value="Core binding factor beta, CBF"/>
    <property type="match status" value="1"/>
</dbReference>
<name>BGB_DROME</name>
<gene>
    <name type="primary">Bgb</name>
    <name type="ORF">CG7959</name>
</gene>
<proteinExistence type="evidence at transcript level"/>
<evidence type="ECO:0000305" key="1"/>
<comment type="function">
    <text>Regulates the DNA-binding properties of Runt.</text>
</comment>
<comment type="subcellular location">
    <subcellularLocation>
        <location evidence="1">Nucleus</location>
    </subcellularLocation>
</comment>
<comment type="similarity">
    <text evidence="1">Belongs to the CBF-beta family.</text>
</comment>
<comment type="sequence caution" evidence="1">
    <conflict type="erroneous initiation">
        <sequence resource="EMBL-CDS" id="AAB03676"/>
    </conflict>
</comment>
<sequence>MMNEAALANMIPYDTIGLYEQPKPRFIFKMPRVVPDQKSKFESDELFRRLSRESEVRYTGYRERSIEERQVRFMNGCREGHTEASFVASGTNLQLVFNANQNPYLHDKECDFDKEHGKVHIKSYFIMNGVCVRFRGWIDLERLDGVGCLEYDERRAMHEDAILRDQIDRYNQRLREFEDTKRAYRDNRQDEMEAVRRGVASGGIGVGASMWRR</sequence>
<keyword id="KW-0539">Nucleus</keyword>
<keyword id="KW-1185">Reference proteome</keyword>